<protein>
    <recommendedName>
        <fullName evidence="1">Tetraacyldisaccharide 4'-kinase</fullName>
        <ecNumber evidence="1">2.7.1.130</ecNumber>
    </recommendedName>
    <alternativeName>
        <fullName evidence="1">Lipid A 4'-kinase</fullName>
    </alternativeName>
</protein>
<accession>A0KLY1</accession>
<gene>
    <name evidence="1" type="primary">lpxK</name>
    <name type="ordered locus">AHA_2777</name>
</gene>
<proteinExistence type="inferred from homology"/>
<organism>
    <name type="scientific">Aeromonas hydrophila subsp. hydrophila (strain ATCC 7966 / DSM 30187 / BCRC 13018 / CCUG 14551 / JCM 1027 / KCTC 2358 / NCIMB 9240 / NCTC 8049)</name>
    <dbReference type="NCBI Taxonomy" id="380703"/>
    <lineage>
        <taxon>Bacteria</taxon>
        <taxon>Pseudomonadati</taxon>
        <taxon>Pseudomonadota</taxon>
        <taxon>Gammaproteobacteria</taxon>
        <taxon>Aeromonadales</taxon>
        <taxon>Aeromonadaceae</taxon>
        <taxon>Aeromonas</taxon>
    </lineage>
</organism>
<keyword id="KW-0067">ATP-binding</keyword>
<keyword id="KW-0418">Kinase</keyword>
<keyword id="KW-0441">Lipid A biosynthesis</keyword>
<keyword id="KW-0444">Lipid biosynthesis</keyword>
<keyword id="KW-0443">Lipid metabolism</keyword>
<keyword id="KW-0547">Nucleotide-binding</keyword>
<keyword id="KW-1185">Reference proteome</keyword>
<keyword id="KW-0808">Transferase</keyword>
<dbReference type="EC" id="2.7.1.130" evidence="1"/>
<dbReference type="EMBL" id="CP000462">
    <property type="protein sequence ID" value="ABK36106.1"/>
    <property type="molecule type" value="Genomic_DNA"/>
</dbReference>
<dbReference type="RefSeq" id="WP_011706582.1">
    <property type="nucleotide sequence ID" value="NC_008570.1"/>
</dbReference>
<dbReference type="RefSeq" id="YP_857282.1">
    <property type="nucleotide sequence ID" value="NC_008570.1"/>
</dbReference>
<dbReference type="SMR" id="A0KLY1"/>
<dbReference type="STRING" id="380703.AHA_2777"/>
<dbReference type="EnsemblBacteria" id="ABK36106">
    <property type="protein sequence ID" value="ABK36106"/>
    <property type="gene ID" value="AHA_2777"/>
</dbReference>
<dbReference type="GeneID" id="4487314"/>
<dbReference type="KEGG" id="aha:AHA_2777"/>
<dbReference type="PATRIC" id="fig|380703.7.peg.2785"/>
<dbReference type="eggNOG" id="COG1663">
    <property type="taxonomic scope" value="Bacteria"/>
</dbReference>
<dbReference type="HOGENOM" id="CLU_038816_2_0_6"/>
<dbReference type="OrthoDB" id="9766423at2"/>
<dbReference type="UniPathway" id="UPA00359">
    <property type="reaction ID" value="UER00482"/>
</dbReference>
<dbReference type="Proteomes" id="UP000000756">
    <property type="component" value="Chromosome"/>
</dbReference>
<dbReference type="GO" id="GO:0005886">
    <property type="term" value="C:plasma membrane"/>
    <property type="evidence" value="ECO:0007669"/>
    <property type="project" value="TreeGrafter"/>
</dbReference>
<dbReference type="GO" id="GO:0005524">
    <property type="term" value="F:ATP binding"/>
    <property type="evidence" value="ECO:0007669"/>
    <property type="project" value="UniProtKB-UniRule"/>
</dbReference>
<dbReference type="GO" id="GO:0009029">
    <property type="term" value="F:tetraacyldisaccharide 4'-kinase activity"/>
    <property type="evidence" value="ECO:0007669"/>
    <property type="project" value="UniProtKB-UniRule"/>
</dbReference>
<dbReference type="GO" id="GO:0009245">
    <property type="term" value="P:lipid A biosynthetic process"/>
    <property type="evidence" value="ECO:0007669"/>
    <property type="project" value="UniProtKB-UniRule"/>
</dbReference>
<dbReference type="GO" id="GO:0009244">
    <property type="term" value="P:lipopolysaccharide core region biosynthetic process"/>
    <property type="evidence" value="ECO:0007669"/>
    <property type="project" value="TreeGrafter"/>
</dbReference>
<dbReference type="HAMAP" id="MF_00409">
    <property type="entry name" value="LpxK"/>
    <property type="match status" value="1"/>
</dbReference>
<dbReference type="InterPro" id="IPR003758">
    <property type="entry name" value="LpxK"/>
</dbReference>
<dbReference type="InterPro" id="IPR027417">
    <property type="entry name" value="P-loop_NTPase"/>
</dbReference>
<dbReference type="NCBIfam" id="TIGR00682">
    <property type="entry name" value="lpxK"/>
    <property type="match status" value="1"/>
</dbReference>
<dbReference type="PANTHER" id="PTHR42724">
    <property type="entry name" value="TETRAACYLDISACCHARIDE 4'-KINASE"/>
    <property type="match status" value="1"/>
</dbReference>
<dbReference type="PANTHER" id="PTHR42724:SF1">
    <property type="entry name" value="TETRAACYLDISACCHARIDE 4'-KINASE, MITOCHONDRIAL-RELATED"/>
    <property type="match status" value="1"/>
</dbReference>
<dbReference type="Pfam" id="PF02606">
    <property type="entry name" value="LpxK"/>
    <property type="match status" value="1"/>
</dbReference>
<dbReference type="SUPFAM" id="SSF52540">
    <property type="entry name" value="P-loop containing nucleoside triphosphate hydrolases"/>
    <property type="match status" value="1"/>
</dbReference>
<feature type="chain" id="PRO_0000291190" description="Tetraacyldisaccharide 4'-kinase">
    <location>
        <begin position="1"/>
        <end position="333"/>
    </location>
</feature>
<feature type="binding site" evidence="1">
    <location>
        <begin position="55"/>
        <end position="62"/>
    </location>
    <ligand>
        <name>ATP</name>
        <dbReference type="ChEBI" id="CHEBI:30616"/>
    </ligand>
</feature>
<comment type="function">
    <text evidence="1">Transfers the gamma-phosphate of ATP to the 4'-position of a tetraacyldisaccharide 1-phosphate intermediate (termed DS-1-P) to form tetraacyldisaccharide 1,4'-bis-phosphate (lipid IVA).</text>
</comment>
<comment type="catalytic activity">
    <reaction evidence="1">
        <text>a lipid A disaccharide + ATP = a lipid IVA + ADP + H(+)</text>
        <dbReference type="Rhea" id="RHEA:67840"/>
        <dbReference type="ChEBI" id="CHEBI:15378"/>
        <dbReference type="ChEBI" id="CHEBI:30616"/>
        <dbReference type="ChEBI" id="CHEBI:176343"/>
        <dbReference type="ChEBI" id="CHEBI:176425"/>
        <dbReference type="ChEBI" id="CHEBI:456216"/>
        <dbReference type="EC" id="2.7.1.130"/>
    </reaction>
</comment>
<comment type="pathway">
    <text evidence="1">Glycolipid biosynthesis; lipid IV(A) biosynthesis; lipid IV(A) from (3R)-3-hydroxytetradecanoyl-[acyl-carrier-protein] and UDP-N-acetyl-alpha-D-glucosamine: step 6/6.</text>
</comment>
<comment type="similarity">
    <text evidence="1">Belongs to the LpxK family.</text>
</comment>
<sequence length="333" mass="36365">MLERLWYAKSGWRWLLAPFALLFAIISGTRRYAYRHGWRKGYRSSLPVIVVGNISVGGNGKTPVVVWLVEQLQARGYRPGVVSRGYGGKAPHYPYRLDAASTTAQAGDEPVLIARRCGCPVVVAPKRADAVRLLEQSGEVDIIITDDGLQHYALARDIELVVVDGARRFGNACLLPMGPLREPVTRLKRVDAIICNGGEPGRGEYPMRLVADVPRRVRDEAPLAAPLSGPVDALAGIGHPPRFFATLEGLGYQLDQRVAYGDHHPFDRDELVGRFAGKPLLMTEKDAVKCRSFALDNWWYLPVSAELPASLLDTLLHKLGAGGKGQGATQAQG</sequence>
<evidence type="ECO:0000255" key="1">
    <source>
        <dbReference type="HAMAP-Rule" id="MF_00409"/>
    </source>
</evidence>
<name>LPXK_AERHH</name>
<reference key="1">
    <citation type="journal article" date="2006" name="J. Bacteriol.">
        <title>Genome sequence of Aeromonas hydrophila ATCC 7966T: jack of all trades.</title>
        <authorList>
            <person name="Seshadri R."/>
            <person name="Joseph S.W."/>
            <person name="Chopra A.K."/>
            <person name="Sha J."/>
            <person name="Shaw J."/>
            <person name="Graf J."/>
            <person name="Haft D.H."/>
            <person name="Wu M."/>
            <person name="Ren Q."/>
            <person name="Rosovitz M.J."/>
            <person name="Madupu R."/>
            <person name="Tallon L."/>
            <person name="Kim M."/>
            <person name="Jin S."/>
            <person name="Vuong H."/>
            <person name="Stine O.C."/>
            <person name="Ali A."/>
            <person name="Horneman A.J."/>
            <person name="Heidelberg J.F."/>
        </authorList>
    </citation>
    <scope>NUCLEOTIDE SEQUENCE [LARGE SCALE GENOMIC DNA]</scope>
    <source>
        <strain>ATCC 7966 / DSM 30187 / BCRC 13018 / CCUG 14551 / JCM 1027 / KCTC 2358 / NCIMB 9240 / NCTC 8049</strain>
    </source>
</reference>